<dbReference type="EMBL" id="AAFI02000162">
    <property type="protein sequence ID" value="EAL62284.1"/>
    <property type="molecule type" value="Genomic_DNA"/>
</dbReference>
<dbReference type="RefSeq" id="XP_635797.1">
    <property type="nucleotide sequence ID" value="XM_630705.1"/>
</dbReference>
<dbReference type="PDB" id="5AN9">
    <property type="method" value="EM"/>
    <property type="resolution" value="3.30 A"/>
    <property type="chains" value="E=1-136"/>
</dbReference>
<dbReference type="PDB" id="5ANB">
    <property type="method" value="EM"/>
    <property type="resolution" value="4.10 A"/>
    <property type="chains" value="E=1-136"/>
</dbReference>
<dbReference type="PDB" id="5ANC">
    <property type="method" value="EM"/>
    <property type="resolution" value="4.20 A"/>
    <property type="chains" value="E=1-136"/>
</dbReference>
<dbReference type="PDB" id="6QKL">
    <property type="method" value="EM"/>
    <property type="resolution" value="3.30 A"/>
    <property type="chains" value="E=1-136"/>
</dbReference>
<dbReference type="PDBsum" id="5AN9"/>
<dbReference type="PDBsum" id="5ANB"/>
<dbReference type="PDBsum" id="5ANC"/>
<dbReference type="PDBsum" id="6QKL"/>
<dbReference type="SMR" id="Q54G86"/>
<dbReference type="FunCoup" id="Q54G86">
    <property type="interactions" value="617"/>
</dbReference>
<dbReference type="STRING" id="44689.Q54G86"/>
<dbReference type="PaxDb" id="44689-DDB0230148"/>
<dbReference type="EnsemblProtists" id="EAL62284">
    <property type="protein sequence ID" value="EAL62284"/>
    <property type="gene ID" value="DDB_G0290315"/>
</dbReference>
<dbReference type="GeneID" id="8627602"/>
<dbReference type="KEGG" id="ddi:DDB_G0290315"/>
<dbReference type="dictyBase" id="DDB_G0290315">
    <property type="gene designation" value="rpl23"/>
</dbReference>
<dbReference type="VEuPathDB" id="AmoebaDB:DDB_G0290315"/>
<dbReference type="eggNOG" id="KOG0901">
    <property type="taxonomic scope" value="Eukaryota"/>
</dbReference>
<dbReference type="HOGENOM" id="CLU_095071_3_0_1"/>
<dbReference type="InParanoid" id="Q54G86"/>
<dbReference type="OMA" id="MIQMQTR"/>
<dbReference type="PhylomeDB" id="Q54G86"/>
<dbReference type="Reactome" id="R-DDI-156827">
    <property type="pathway name" value="L13a-mediated translational silencing of Ceruloplasmin expression"/>
</dbReference>
<dbReference type="Reactome" id="R-DDI-1799339">
    <property type="pathway name" value="SRP-dependent cotranslational protein targeting to membrane"/>
</dbReference>
<dbReference type="Reactome" id="R-DDI-72689">
    <property type="pathway name" value="Formation of a pool of free 40S subunits"/>
</dbReference>
<dbReference type="Reactome" id="R-DDI-72706">
    <property type="pathway name" value="GTP hydrolysis and joining of the 60S ribosomal subunit"/>
</dbReference>
<dbReference type="Reactome" id="R-DDI-975956">
    <property type="pathway name" value="Nonsense Mediated Decay (NMD) independent of the Exon Junction Complex (EJC)"/>
</dbReference>
<dbReference type="Reactome" id="R-DDI-975957">
    <property type="pathway name" value="Nonsense Mediated Decay (NMD) enhanced by the Exon Junction Complex (EJC)"/>
</dbReference>
<dbReference type="EvolutionaryTrace" id="Q54G86"/>
<dbReference type="PRO" id="PR:Q54G86"/>
<dbReference type="Proteomes" id="UP000002195">
    <property type="component" value="Chromosome 5"/>
</dbReference>
<dbReference type="GO" id="GO:0022625">
    <property type="term" value="C:cytosolic large ribosomal subunit"/>
    <property type="evidence" value="ECO:0000318"/>
    <property type="project" value="GO_Central"/>
</dbReference>
<dbReference type="GO" id="GO:0031012">
    <property type="term" value="C:extracellular matrix"/>
    <property type="evidence" value="ECO:0007005"/>
    <property type="project" value="dictyBase"/>
</dbReference>
<dbReference type="GO" id="GO:0070180">
    <property type="term" value="F:large ribosomal subunit rRNA binding"/>
    <property type="evidence" value="ECO:0000318"/>
    <property type="project" value="GO_Central"/>
</dbReference>
<dbReference type="GO" id="GO:0003735">
    <property type="term" value="F:structural constituent of ribosome"/>
    <property type="evidence" value="ECO:0000318"/>
    <property type="project" value="GO_Central"/>
</dbReference>
<dbReference type="GO" id="GO:0006412">
    <property type="term" value="P:translation"/>
    <property type="evidence" value="ECO:0007669"/>
    <property type="project" value="InterPro"/>
</dbReference>
<dbReference type="CDD" id="cd00337">
    <property type="entry name" value="Ribosomal_uL14"/>
    <property type="match status" value="1"/>
</dbReference>
<dbReference type="FunFam" id="2.40.150.20:FF:000017">
    <property type="entry name" value="S60 ribosomal protein L23"/>
    <property type="match status" value="1"/>
</dbReference>
<dbReference type="Gene3D" id="2.40.150.20">
    <property type="entry name" value="Ribosomal protein L14"/>
    <property type="match status" value="1"/>
</dbReference>
<dbReference type="HAMAP" id="MF_01367">
    <property type="entry name" value="Ribosomal_uL14"/>
    <property type="match status" value="1"/>
</dbReference>
<dbReference type="InterPro" id="IPR000218">
    <property type="entry name" value="Ribosomal_uL14"/>
</dbReference>
<dbReference type="InterPro" id="IPR036853">
    <property type="entry name" value="Ribosomal_uL14_sf"/>
</dbReference>
<dbReference type="PANTHER" id="PTHR11761">
    <property type="entry name" value="50S/60S RIBOSOMAL PROTEIN L14/L23"/>
    <property type="match status" value="1"/>
</dbReference>
<dbReference type="PANTHER" id="PTHR11761:SF8">
    <property type="entry name" value="LARGE RIBOSOMAL SUBUNIT PROTEIN UL14"/>
    <property type="match status" value="1"/>
</dbReference>
<dbReference type="Pfam" id="PF00238">
    <property type="entry name" value="Ribosomal_L14"/>
    <property type="match status" value="1"/>
</dbReference>
<dbReference type="SMART" id="SM01374">
    <property type="entry name" value="Ribosomal_L14"/>
    <property type="match status" value="1"/>
</dbReference>
<dbReference type="SUPFAM" id="SSF50193">
    <property type="entry name" value="Ribosomal protein L14"/>
    <property type="match status" value="1"/>
</dbReference>
<accession>Q54G86</accession>
<comment type="similarity">
    <text evidence="1">Belongs to the universal ribosomal protein uL14 family.</text>
</comment>
<keyword id="KW-0002">3D-structure</keyword>
<keyword id="KW-1185">Reference proteome</keyword>
<keyword id="KW-0687">Ribonucleoprotein</keyword>
<keyword id="KW-0689">Ribosomal protein</keyword>
<feature type="chain" id="PRO_0000325941" description="Large ribosomal subunit protein uL14">
    <location>
        <begin position="1"/>
        <end position="136"/>
    </location>
</feature>
<feature type="strand" evidence="2">
    <location>
        <begin position="6"/>
        <end position="8"/>
    </location>
</feature>
<feature type="strand" evidence="2">
    <location>
        <begin position="22"/>
        <end position="24"/>
    </location>
</feature>
<feature type="strand" evidence="2">
    <location>
        <begin position="27"/>
        <end position="30"/>
    </location>
</feature>
<feature type="strand" evidence="2">
    <location>
        <begin position="32"/>
        <end position="41"/>
    </location>
</feature>
<feature type="strand" evidence="2">
    <location>
        <begin position="57"/>
        <end position="61"/>
    </location>
</feature>
<feature type="strand" evidence="2">
    <location>
        <begin position="63"/>
        <end position="65"/>
    </location>
</feature>
<feature type="turn" evidence="2">
    <location>
        <begin position="67"/>
        <end position="69"/>
    </location>
</feature>
<feature type="strand" evidence="2">
    <location>
        <begin position="74"/>
        <end position="80"/>
    </location>
</feature>
<feature type="strand" evidence="2">
    <location>
        <begin position="88"/>
        <end position="90"/>
    </location>
</feature>
<feature type="strand" evidence="2">
    <location>
        <begin position="92"/>
        <end position="97"/>
    </location>
</feature>
<feature type="strand" evidence="2">
    <location>
        <begin position="99"/>
        <end position="102"/>
    </location>
</feature>
<feature type="helix" evidence="2">
    <location>
        <begin position="119"/>
        <end position="124"/>
    </location>
</feature>
<feature type="helix" evidence="2">
    <location>
        <begin position="126"/>
        <end position="131"/>
    </location>
</feature>
<protein>
    <recommendedName>
        <fullName evidence="1">Large ribosomal subunit protein uL14</fullName>
    </recommendedName>
    <alternativeName>
        <fullName>60S ribosomal protein L23</fullName>
    </alternativeName>
</protein>
<gene>
    <name type="primary">rpl23</name>
    <name type="ORF">DDB_G0290315</name>
</gene>
<sequence length="136" mass="14543">MSKAQAVGSNYRVSLGLPVGAVMNSADNSGAKNLYVIAVKGIKGRLNRLPSAGVGDMVMATVKKGKPELRKKVCTGLVVRQRKHWKRKDGVYIYFEDNAGVMCNPKGEVKGNILGPVAKECSDLWPKVATNAGTIV</sequence>
<evidence type="ECO:0000305" key="1"/>
<evidence type="ECO:0007829" key="2">
    <source>
        <dbReference type="PDB" id="5AN9"/>
    </source>
</evidence>
<proteinExistence type="evidence at protein level"/>
<organism>
    <name type="scientific">Dictyostelium discoideum</name>
    <name type="common">Social amoeba</name>
    <dbReference type="NCBI Taxonomy" id="44689"/>
    <lineage>
        <taxon>Eukaryota</taxon>
        <taxon>Amoebozoa</taxon>
        <taxon>Evosea</taxon>
        <taxon>Eumycetozoa</taxon>
        <taxon>Dictyostelia</taxon>
        <taxon>Dictyosteliales</taxon>
        <taxon>Dictyosteliaceae</taxon>
        <taxon>Dictyostelium</taxon>
    </lineage>
</organism>
<name>RL23_DICDI</name>
<reference key="1">
    <citation type="journal article" date="2005" name="Nature">
        <title>The genome of the social amoeba Dictyostelium discoideum.</title>
        <authorList>
            <person name="Eichinger L."/>
            <person name="Pachebat J.A."/>
            <person name="Gloeckner G."/>
            <person name="Rajandream M.A."/>
            <person name="Sucgang R."/>
            <person name="Berriman M."/>
            <person name="Song J."/>
            <person name="Olsen R."/>
            <person name="Szafranski K."/>
            <person name="Xu Q."/>
            <person name="Tunggal B."/>
            <person name="Kummerfeld S."/>
            <person name="Madera M."/>
            <person name="Konfortov B.A."/>
            <person name="Rivero F."/>
            <person name="Bankier A.T."/>
            <person name="Lehmann R."/>
            <person name="Hamlin N."/>
            <person name="Davies R."/>
            <person name="Gaudet P."/>
            <person name="Fey P."/>
            <person name="Pilcher K."/>
            <person name="Chen G."/>
            <person name="Saunders D."/>
            <person name="Sodergren E.J."/>
            <person name="Davis P."/>
            <person name="Kerhornou A."/>
            <person name="Nie X."/>
            <person name="Hall N."/>
            <person name="Anjard C."/>
            <person name="Hemphill L."/>
            <person name="Bason N."/>
            <person name="Farbrother P."/>
            <person name="Desany B."/>
            <person name="Just E."/>
            <person name="Morio T."/>
            <person name="Rost R."/>
            <person name="Churcher C.M."/>
            <person name="Cooper J."/>
            <person name="Haydock S."/>
            <person name="van Driessche N."/>
            <person name="Cronin A."/>
            <person name="Goodhead I."/>
            <person name="Muzny D.M."/>
            <person name="Mourier T."/>
            <person name="Pain A."/>
            <person name="Lu M."/>
            <person name="Harper D."/>
            <person name="Lindsay R."/>
            <person name="Hauser H."/>
            <person name="James K.D."/>
            <person name="Quiles M."/>
            <person name="Madan Babu M."/>
            <person name="Saito T."/>
            <person name="Buchrieser C."/>
            <person name="Wardroper A."/>
            <person name="Felder M."/>
            <person name="Thangavelu M."/>
            <person name="Johnson D."/>
            <person name="Knights A."/>
            <person name="Loulseged H."/>
            <person name="Mungall K.L."/>
            <person name="Oliver K."/>
            <person name="Price C."/>
            <person name="Quail M.A."/>
            <person name="Urushihara H."/>
            <person name="Hernandez J."/>
            <person name="Rabbinowitsch E."/>
            <person name="Steffen D."/>
            <person name="Sanders M."/>
            <person name="Ma J."/>
            <person name="Kohara Y."/>
            <person name="Sharp S."/>
            <person name="Simmonds M.N."/>
            <person name="Spiegler S."/>
            <person name="Tivey A."/>
            <person name="Sugano S."/>
            <person name="White B."/>
            <person name="Walker D."/>
            <person name="Woodward J.R."/>
            <person name="Winckler T."/>
            <person name="Tanaka Y."/>
            <person name="Shaulsky G."/>
            <person name="Schleicher M."/>
            <person name="Weinstock G.M."/>
            <person name="Rosenthal A."/>
            <person name="Cox E.C."/>
            <person name="Chisholm R.L."/>
            <person name="Gibbs R.A."/>
            <person name="Loomis W.F."/>
            <person name="Platzer M."/>
            <person name="Kay R.R."/>
            <person name="Williams J.G."/>
            <person name="Dear P.H."/>
            <person name="Noegel A.A."/>
            <person name="Barrell B.G."/>
            <person name="Kuspa A."/>
        </authorList>
    </citation>
    <scope>NUCLEOTIDE SEQUENCE [LARGE SCALE GENOMIC DNA]</scope>
    <source>
        <strain>AX4</strain>
    </source>
</reference>